<evidence type="ECO:0000255" key="1"/>
<evidence type="ECO:0000305" key="2"/>
<keyword id="KW-1003">Cell membrane</keyword>
<keyword id="KW-0472">Membrane</keyword>
<keyword id="KW-1185">Reference proteome</keyword>
<keyword id="KW-0812">Transmembrane</keyword>
<keyword id="KW-1133">Transmembrane helix</keyword>
<dbReference type="EMBL" id="AE000783">
    <property type="status" value="NOT_ANNOTATED_CDS"/>
    <property type="molecule type" value="Genomic_DNA"/>
</dbReference>
<dbReference type="PIR" id="G70193">
    <property type="entry name" value="G70193"/>
</dbReference>
<dbReference type="RefSeq" id="WP_023003302.1">
    <property type="nucleotide sequence ID" value="NC_001318.1"/>
</dbReference>
<dbReference type="RefSeq" id="YP_008686590.1">
    <property type="nucleotide sequence ID" value="NC_001318.1"/>
</dbReference>
<dbReference type="PATRIC" id="fig|224326.49.peg.1142"/>
<dbReference type="OrthoDB" id="350023at2"/>
<dbReference type="Proteomes" id="UP000001807">
    <property type="component" value="Chromosome"/>
</dbReference>
<dbReference type="GO" id="GO:0005886">
    <property type="term" value="C:plasma membrane"/>
    <property type="evidence" value="ECO:0007669"/>
    <property type="project" value="UniProtKB-SubCell"/>
</dbReference>
<dbReference type="InterPro" id="IPR019196">
    <property type="entry name" value="ABC_transp_unknown"/>
</dbReference>
<dbReference type="InterPro" id="IPR055396">
    <property type="entry name" value="DUF7088"/>
</dbReference>
<dbReference type="Pfam" id="PF09822">
    <property type="entry name" value="ABC_transp_aux"/>
    <property type="match status" value="1"/>
</dbReference>
<dbReference type="Pfam" id="PF23357">
    <property type="entry name" value="DUF7088"/>
    <property type="match status" value="1"/>
</dbReference>
<reference key="1">
    <citation type="journal article" date="1997" name="Nature">
        <title>Genomic sequence of a Lyme disease spirochaete, Borrelia burgdorferi.</title>
        <authorList>
            <person name="Fraser C.M."/>
            <person name="Casjens S."/>
            <person name="Huang W.M."/>
            <person name="Sutton G.G."/>
            <person name="Clayton R.A."/>
            <person name="Lathigra R."/>
            <person name="White O."/>
            <person name="Ketchum K.A."/>
            <person name="Dodson R.J."/>
            <person name="Hickey E.K."/>
            <person name="Gwinn M.L."/>
            <person name="Dougherty B.A."/>
            <person name="Tomb J.-F."/>
            <person name="Fleischmann R.D."/>
            <person name="Richardson D.L."/>
            <person name="Peterson J.D."/>
            <person name="Kerlavage A.R."/>
            <person name="Quackenbush J."/>
            <person name="Salzberg S.L."/>
            <person name="Hanson M."/>
            <person name="van Vugt R."/>
            <person name="Palmer N."/>
            <person name="Adams M.D."/>
            <person name="Gocayne J.D."/>
            <person name="Weidman J.F."/>
            <person name="Utterback T.R."/>
            <person name="Watthey L."/>
            <person name="McDonald L.A."/>
            <person name="Artiach P."/>
            <person name="Bowman C."/>
            <person name="Garland S.A."/>
            <person name="Fujii C."/>
            <person name="Cotton M.D."/>
            <person name="Horst K."/>
            <person name="Roberts K.M."/>
            <person name="Hatch B."/>
            <person name="Smith H.O."/>
            <person name="Venter J.C."/>
        </authorList>
    </citation>
    <scope>NUCLEOTIDE SEQUENCE [LARGE SCALE GENOMIC DNA]</scope>
    <source>
        <strain>ATCC 35210 / DSM 4680 / CIP 102532 / B31</strain>
    </source>
</reference>
<sequence>MKNKENEVLNLTLNLTIIFLIFCNISIXIFKIDFTKHKAFTISKVTKNLFSSANETIYITYYNSGSLENYFAFPNQIKNFLISFSDASKCKVIYKEIDADKISTPLEHIGIPSQQIDLRDINQLSILKIYSGIEIIYEGKREVIPVVTEISNLEYDLANGLDKLINNTKKVLGLAFGDSTLKEAHKNFSEIMKKAFGIEIKEIDLKTEKLEDIRKDINGLFIIGAKEIDEEIAKKIDDFIVNDGKIFVATSTIDYNPQNPYGITPIKSSLFDLFESYGIKYNDNIILDKRAPTIFLGGNFQTYYPWILIDKSNIVKKDMPLLKNFYTATIPWSSSLELIKKDETEVKFLPLFASSKQSWQVKEPNLSNISLNAFEVPNKFEENKTKILGYAIEGKIKSPYKDQYSKNSKIILTGSSMIFSDYMYNGSPSNFELSGRISDYLMQKEEFFNIKSREVRAKLKFASSSNEMVNAKFSLIIVNLIILPTIILIFGLVRFTRKRKAN</sequence>
<proteinExistence type="predicted"/>
<organism>
    <name type="scientific">Borreliella burgdorferi (strain ATCC 35210 / DSM 4680 / CIP 102532 / B31)</name>
    <name type="common">Borrelia burgdorferi</name>
    <dbReference type="NCBI Taxonomy" id="224326"/>
    <lineage>
        <taxon>Bacteria</taxon>
        <taxon>Pseudomonadati</taxon>
        <taxon>Spirochaetota</taxon>
        <taxon>Spirochaetia</taxon>
        <taxon>Spirochaetales</taxon>
        <taxon>Borreliaceae</taxon>
        <taxon>Borreliella</taxon>
    </lineage>
</organism>
<feature type="chain" id="PRO_0000174413" description="Uncharacterized protein BB_0752">
    <location>
        <begin position="1"/>
        <end position="502"/>
    </location>
</feature>
<feature type="transmembrane region" description="Helical" evidence="1">
    <location>
        <begin position="10"/>
        <end position="30"/>
    </location>
</feature>
<feature type="transmembrane region" description="Helical" evidence="1">
    <location>
        <begin position="473"/>
        <end position="493"/>
    </location>
</feature>
<name>Y752_BORBU</name>
<comment type="subcellular location">
    <subcellularLocation>
        <location evidence="2">Cell membrane</location>
        <topology evidence="2">Multi-pass membrane protein</topology>
    </subcellularLocation>
</comment>
<gene>
    <name type="ordered locus">BB_0752</name>
</gene>
<accession>O51693</accession>
<protein>
    <recommendedName>
        <fullName>Uncharacterized protein BB_0752</fullName>
    </recommendedName>
</protein>